<keyword id="KW-0150">Chloroplast</keyword>
<keyword id="KW-0934">Plastid</keyword>
<keyword id="KW-0687">Ribonucleoprotein</keyword>
<keyword id="KW-0689">Ribosomal protein</keyword>
<keyword id="KW-0694">RNA-binding</keyword>
<keyword id="KW-0699">rRNA-binding</keyword>
<feature type="chain" id="PRO_0000132557" description="Small ribosomal subunit protein uS4c">
    <location>
        <begin position="1"/>
        <end position="196" status="greater than"/>
    </location>
</feature>
<feature type="domain" description="S4 RNA-binding">
    <location>
        <begin position="89"/>
        <end position="169"/>
    </location>
</feature>
<feature type="region of interest" description="Disordered" evidence="2">
    <location>
        <begin position="16"/>
        <end position="36"/>
    </location>
</feature>
<feature type="non-terminal residue">
    <location>
        <position position="196"/>
    </location>
</feature>
<comment type="function">
    <text evidence="1">One of the primary rRNA binding proteins, it binds directly to 16S rRNA where it nucleates assembly of the body of the 30S subunit.</text>
</comment>
<comment type="function">
    <text evidence="1">With S5 and S12 plays an important role in translational accuracy.</text>
</comment>
<comment type="subunit">
    <text evidence="1">Part of the 30S ribosomal subunit. Contacts protein S5. The interaction surface between S4 and S5 is involved in control of translational fidelity (By similarity).</text>
</comment>
<comment type="subcellular location">
    <subcellularLocation>
        <location>Plastid</location>
        <location>Chloroplast</location>
    </subcellularLocation>
</comment>
<comment type="similarity">
    <text evidence="3">Belongs to the universal ribosomal protein uS4 family.</text>
</comment>
<dbReference type="EMBL" id="Z29234">
    <property type="protein sequence ID" value="CAA82433.1"/>
    <property type="molecule type" value="Genomic_DNA"/>
</dbReference>
<dbReference type="PIR" id="S41262">
    <property type="entry name" value="S41262"/>
</dbReference>
<dbReference type="SMR" id="P69638"/>
<dbReference type="GO" id="GO:0009507">
    <property type="term" value="C:chloroplast"/>
    <property type="evidence" value="ECO:0007669"/>
    <property type="project" value="UniProtKB-SubCell"/>
</dbReference>
<dbReference type="GO" id="GO:0015935">
    <property type="term" value="C:small ribosomal subunit"/>
    <property type="evidence" value="ECO:0007669"/>
    <property type="project" value="InterPro"/>
</dbReference>
<dbReference type="GO" id="GO:0019843">
    <property type="term" value="F:rRNA binding"/>
    <property type="evidence" value="ECO:0007669"/>
    <property type="project" value="UniProtKB-KW"/>
</dbReference>
<dbReference type="GO" id="GO:0003735">
    <property type="term" value="F:structural constituent of ribosome"/>
    <property type="evidence" value="ECO:0007669"/>
    <property type="project" value="InterPro"/>
</dbReference>
<dbReference type="GO" id="GO:0042274">
    <property type="term" value="P:ribosomal small subunit biogenesis"/>
    <property type="evidence" value="ECO:0007669"/>
    <property type="project" value="TreeGrafter"/>
</dbReference>
<dbReference type="GO" id="GO:0006412">
    <property type="term" value="P:translation"/>
    <property type="evidence" value="ECO:0007669"/>
    <property type="project" value="InterPro"/>
</dbReference>
<dbReference type="CDD" id="cd00165">
    <property type="entry name" value="S4"/>
    <property type="match status" value="1"/>
</dbReference>
<dbReference type="FunFam" id="1.10.1050.10:FF:000002">
    <property type="entry name" value="30S ribosomal protein S4, chloroplastic"/>
    <property type="match status" value="1"/>
</dbReference>
<dbReference type="FunFam" id="3.10.290.10:FF:000081">
    <property type="entry name" value="30S ribosomal protein S4, chloroplastic"/>
    <property type="match status" value="1"/>
</dbReference>
<dbReference type="Gene3D" id="1.10.1050.10">
    <property type="entry name" value="Ribosomal Protein S4 Delta 41, Chain A, domain 1"/>
    <property type="match status" value="1"/>
</dbReference>
<dbReference type="Gene3D" id="3.10.290.10">
    <property type="entry name" value="RNA-binding S4 domain"/>
    <property type="match status" value="1"/>
</dbReference>
<dbReference type="HAMAP" id="MF_01306_B">
    <property type="entry name" value="Ribosomal_uS4_B"/>
    <property type="match status" value="1"/>
</dbReference>
<dbReference type="InterPro" id="IPR022801">
    <property type="entry name" value="Ribosomal_uS4"/>
</dbReference>
<dbReference type="InterPro" id="IPR005709">
    <property type="entry name" value="Ribosomal_uS4_bac-type"/>
</dbReference>
<dbReference type="InterPro" id="IPR018079">
    <property type="entry name" value="Ribosomal_uS4_CS"/>
</dbReference>
<dbReference type="InterPro" id="IPR001912">
    <property type="entry name" value="Ribosomal_uS4_N"/>
</dbReference>
<dbReference type="InterPro" id="IPR002942">
    <property type="entry name" value="S4_RNA-bd"/>
</dbReference>
<dbReference type="InterPro" id="IPR036986">
    <property type="entry name" value="S4_RNA-bd_sf"/>
</dbReference>
<dbReference type="NCBIfam" id="NF003717">
    <property type="entry name" value="PRK05327.1"/>
    <property type="match status" value="1"/>
</dbReference>
<dbReference type="NCBIfam" id="TIGR01017">
    <property type="entry name" value="rpsD_bact"/>
    <property type="match status" value="1"/>
</dbReference>
<dbReference type="PANTHER" id="PTHR11831">
    <property type="entry name" value="30S 40S RIBOSOMAL PROTEIN"/>
    <property type="match status" value="1"/>
</dbReference>
<dbReference type="PANTHER" id="PTHR11831:SF4">
    <property type="entry name" value="SMALL RIBOSOMAL SUBUNIT PROTEIN US4M"/>
    <property type="match status" value="1"/>
</dbReference>
<dbReference type="Pfam" id="PF00163">
    <property type="entry name" value="Ribosomal_S4"/>
    <property type="match status" value="1"/>
</dbReference>
<dbReference type="Pfam" id="PF01479">
    <property type="entry name" value="S4"/>
    <property type="match status" value="1"/>
</dbReference>
<dbReference type="SMART" id="SM01390">
    <property type="entry name" value="Ribosomal_S4"/>
    <property type="match status" value="1"/>
</dbReference>
<dbReference type="SMART" id="SM00363">
    <property type="entry name" value="S4"/>
    <property type="match status" value="1"/>
</dbReference>
<dbReference type="SUPFAM" id="SSF55174">
    <property type="entry name" value="Alpha-L RNA-binding motif"/>
    <property type="match status" value="1"/>
</dbReference>
<dbReference type="PROSITE" id="PS00632">
    <property type="entry name" value="RIBOSOMAL_S4"/>
    <property type="match status" value="1"/>
</dbReference>
<dbReference type="PROSITE" id="PS50889">
    <property type="entry name" value="S4"/>
    <property type="match status" value="1"/>
</dbReference>
<gene>
    <name type="primary">rps4</name>
</gene>
<name>RR4_CINLA</name>
<accession>P69638</accession>
<accession>P36445</accession>
<accession>P36453</accession>
<accession>P36455</accession>
<accession>P36462</accession>
<organism>
    <name type="scientific">Cinna latifolia</name>
    <name type="common">Drooping woodreed</name>
    <name type="synonym">Agrostis latifolia</name>
    <dbReference type="NCBI Taxonomy" id="29669"/>
    <lineage>
        <taxon>Eukaryota</taxon>
        <taxon>Viridiplantae</taxon>
        <taxon>Streptophyta</taxon>
        <taxon>Embryophyta</taxon>
        <taxon>Tracheophyta</taxon>
        <taxon>Spermatophyta</taxon>
        <taxon>Magnoliopsida</taxon>
        <taxon>Liliopsida</taxon>
        <taxon>Poales</taxon>
        <taxon>Poaceae</taxon>
        <taxon>BOP clade</taxon>
        <taxon>Pooideae</taxon>
        <taxon>Poodae</taxon>
        <taxon>Poeae</taxon>
        <taxon>Poeae Chloroplast Group 2 (Poeae type)</taxon>
        <taxon>Poodinae</taxon>
        <taxon>Cinninae</taxon>
        <taxon>Cinna</taxon>
    </lineage>
</organism>
<evidence type="ECO:0000250" key="1"/>
<evidence type="ECO:0000256" key="2">
    <source>
        <dbReference type="SAM" id="MobiDB-lite"/>
    </source>
</evidence>
<evidence type="ECO:0000305" key="3"/>
<sequence>MSRYRGPRLKKIRRLGALPGLTRKTPKSGSNLKKKFHSGKKEQYRIRLQEKQKLRFHYGLTERQLLRYVHIAGKAKRSTGQVLLQLLEMRLDNILFRLGMASTIPGARQLVNHRHILVNGRIVNIPSFRCKPRDIITTKDNQRSKGLVQNFIASSDPGKLPKHLTIDTLEYKGLVNKILDRKWVGLKINELLVVEY</sequence>
<reference key="1">
    <citation type="journal article" date="1994" name="Plant Syst. Evol.">
        <title>The chloroplast gene rps4 as a tool for the study of Poaceae phylogeny.</title>
        <authorList>
            <person name="Nadot S."/>
            <person name="Bajon R."/>
            <person name="Lejeune B."/>
        </authorList>
        <dbReference type="AGRICOLA" id="IND20417698"/>
    </citation>
    <scope>NUCLEOTIDE SEQUENCE [GENOMIC DNA]</scope>
</reference>
<protein>
    <recommendedName>
        <fullName evidence="3">Small ribosomal subunit protein uS4c</fullName>
    </recommendedName>
    <alternativeName>
        <fullName>30S ribosomal protein S4, chloroplastic</fullName>
    </alternativeName>
</protein>
<geneLocation type="chloroplast"/>
<proteinExistence type="inferred from homology"/>